<feature type="signal peptide" evidence="2">
    <location>
        <begin position="1"/>
        <end position="21"/>
    </location>
</feature>
<feature type="propeptide" id="PRO_0000400548" evidence="1">
    <location>
        <begin position="22"/>
        <end position="48"/>
    </location>
</feature>
<feature type="peptide" id="PRO_0000400549" description="Mu-theraphotoxin-Hhn2p">
    <location>
        <begin position="49"/>
        <end position="81"/>
    </location>
</feature>
<feature type="modified residue" description="Leucine amide" evidence="1">
    <location>
        <position position="81"/>
    </location>
</feature>
<feature type="disulfide bond" evidence="1">
    <location>
        <begin position="50"/>
        <end position="65"/>
    </location>
</feature>
<feature type="disulfide bond" evidence="1">
    <location>
        <begin position="57"/>
        <end position="70"/>
    </location>
</feature>
<feature type="disulfide bond" evidence="1">
    <location>
        <begin position="64"/>
        <end position="77"/>
    </location>
</feature>
<sequence>MKASMYLALAGLVLLFVVGYASESEEKEFPRELLSKIFAVDDFKGEERGCKGFGDSCTPGKNECCPNYACSCKHKWCKVYLGK</sequence>
<organism>
    <name type="scientific">Cyriopagopus hainanus</name>
    <name type="common">Chinese bird spider</name>
    <name type="synonym">Haplopelma hainanum</name>
    <dbReference type="NCBI Taxonomy" id="209901"/>
    <lineage>
        <taxon>Eukaryota</taxon>
        <taxon>Metazoa</taxon>
        <taxon>Ecdysozoa</taxon>
        <taxon>Arthropoda</taxon>
        <taxon>Chelicerata</taxon>
        <taxon>Arachnida</taxon>
        <taxon>Araneae</taxon>
        <taxon>Mygalomorphae</taxon>
        <taxon>Theraphosidae</taxon>
        <taxon>Haplopelma</taxon>
    </lineage>
</organism>
<accession>D2Y1Z1</accession>
<keyword id="KW-0027">Amidation</keyword>
<keyword id="KW-1015">Disulfide bond</keyword>
<keyword id="KW-0872">Ion channel impairing toxin</keyword>
<keyword id="KW-0960">Knottin</keyword>
<keyword id="KW-0528">Neurotoxin</keyword>
<keyword id="KW-0638">Presynaptic neurotoxin</keyword>
<keyword id="KW-0964">Secreted</keyword>
<keyword id="KW-0732">Signal</keyword>
<keyword id="KW-0800">Toxin</keyword>
<keyword id="KW-0738">Voltage-gated sodium channel impairing toxin</keyword>
<proteinExistence type="evidence at transcript level"/>
<evidence type="ECO:0000250" key="1"/>
<evidence type="ECO:0000255" key="2"/>
<evidence type="ECO:0000305" key="3"/>
<dbReference type="EMBL" id="GU292868">
    <property type="protein sequence ID" value="ADB56684.1"/>
    <property type="molecule type" value="mRNA"/>
</dbReference>
<dbReference type="SMR" id="D2Y1Z1"/>
<dbReference type="ArachnoServer" id="AS001633">
    <property type="toxin name" value="mu-theraphotoxin-Hhn2p"/>
</dbReference>
<dbReference type="GO" id="GO:0005576">
    <property type="term" value="C:extracellular region"/>
    <property type="evidence" value="ECO:0007669"/>
    <property type="project" value="UniProtKB-SubCell"/>
</dbReference>
<dbReference type="GO" id="GO:0044231">
    <property type="term" value="C:host cell presynaptic membrane"/>
    <property type="evidence" value="ECO:0007669"/>
    <property type="project" value="UniProtKB-KW"/>
</dbReference>
<dbReference type="GO" id="GO:0008200">
    <property type="term" value="F:ion channel inhibitor activity"/>
    <property type="evidence" value="ECO:0007669"/>
    <property type="project" value="InterPro"/>
</dbReference>
<dbReference type="GO" id="GO:0017080">
    <property type="term" value="F:sodium channel regulator activity"/>
    <property type="evidence" value="ECO:0007669"/>
    <property type="project" value="UniProtKB-KW"/>
</dbReference>
<dbReference type="GO" id="GO:0090729">
    <property type="term" value="F:toxin activity"/>
    <property type="evidence" value="ECO:0007669"/>
    <property type="project" value="UniProtKB-KW"/>
</dbReference>
<dbReference type="InterPro" id="IPR011696">
    <property type="entry name" value="Huwentoxin-1"/>
</dbReference>
<dbReference type="InterPro" id="IPR013140">
    <property type="entry name" value="Huwentoxin_CS1"/>
</dbReference>
<dbReference type="Pfam" id="PF07740">
    <property type="entry name" value="Toxin_12"/>
    <property type="match status" value="1"/>
</dbReference>
<dbReference type="SUPFAM" id="SSF57059">
    <property type="entry name" value="omega toxin-like"/>
    <property type="match status" value="1"/>
</dbReference>
<dbReference type="PROSITE" id="PS60021">
    <property type="entry name" value="HWTX_1"/>
    <property type="match status" value="1"/>
</dbReference>
<name>H3H01_CYRHA</name>
<comment type="function">
    <text evidence="1">Lethal neurotoxin. Selectively blocks tetrodotoxin-sensitive voltage-gated sodium channels (Nav). Does not affect tetrodotoxin-resistant voltage-gated sodium channels or calcium channels (By similarity).</text>
</comment>
<comment type="subunit">
    <text evidence="1">Monomer.</text>
</comment>
<comment type="subcellular location">
    <subcellularLocation>
        <location evidence="1">Secreted</location>
    </subcellularLocation>
</comment>
<comment type="tissue specificity">
    <text>Expressed by the venom gland.</text>
</comment>
<comment type="domain">
    <text evidence="1">The presence of a 'disulfide through disulfide knot' structurally defines this protein as a knottin.</text>
</comment>
<comment type="similarity">
    <text evidence="3">Belongs to the neurotoxin 10 (Hwtx-1) family. 15 (Hntx-3) subfamily.</text>
</comment>
<protein>
    <recommendedName>
        <fullName>Mu-theraphotoxin-Hhn2p</fullName>
        <shortName>Mu-TRTX-Hhn2p</shortName>
    </recommendedName>
    <alternativeName>
        <fullName>Hainantoxin-III-8</fullName>
        <shortName>HNTX-III-8</shortName>
    </alternativeName>
</protein>
<reference key="1">
    <citation type="journal article" date="2010" name="J. Proteome Res.">
        <title>Molecular diversification of peptide toxins from the tarantula Haplopelma hainanum (Ornithoctonus hainana) venom based on transcriptomic, peptidomic, and genomic analyses.</title>
        <authorList>
            <person name="Tang X."/>
            <person name="Zhang Y."/>
            <person name="Hu W."/>
            <person name="Xu D."/>
            <person name="Tao H."/>
            <person name="Yang X."/>
            <person name="Li Y."/>
            <person name="Jiang L."/>
            <person name="Liang S."/>
        </authorList>
    </citation>
    <scope>NUCLEOTIDE SEQUENCE [LARGE SCALE MRNA]</scope>
    <source>
        <tissue>Venom gland</tissue>
    </source>
</reference>